<dbReference type="EMBL" id="CP000901">
    <property type="protein sequence ID" value="ABX88472.1"/>
    <property type="molecule type" value="Genomic_DNA"/>
</dbReference>
<dbReference type="RefSeq" id="WP_002209023.1">
    <property type="nucleotide sequence ID" value="NZ_CP009935.1"/>
</dbReference>
<dbReference type="SMR" id="A9R931"/>
<dbReference type="KEGG" id="ypg:YpAngola_A0619"/>
<dbReference type="PATRIC" id="fig|349746.12.peg.1571"/>
<dbReference type="HAMAP" id="MF_00598">
    <property type="entry name" value="Smg"/>
    <property type="match status" value="1"/>
</dbReference>
<dbReference type="InterPro" id="IPR007456">
    <property type="entry name" value="Smg"/>
</dbReference>
<dbReference type="NCBIfam" id="NF002897">
    <property type="entry name" value="PRK03430.1"/>
    <property type="match status" value="1"/>
</dbReference>
<dbReference type="PANTHER" id="PTHR38692">
    <property type="entry name" value="PROTEIN SMG"/>
    <property type="match status" value="1"/>
</dbReference>
<dbReference type="PANTHER" id="PTHR38692:SF1">
    <property type="entry name" value="PROTEIN SMG"/>
    <property type="match status" value="1"/>
</dbReference>
<dbReference type="Pfam" id="PF04361">
    <property type="entry name" value="DUF494"/>
    <property type="match status" value="1"/>
</dbReference>
<gene>
    <name evidence="1" type="primary">smg</name>
    <name type="ordered locus">YpAngola_A0619</name>
</gene>
<name>SMG_YERPG</name>
<proteinExistence type="inferred from homology"/>
<accession>A9R931</accession>
<sequence length="157" mass="18472">MFDVLIYLFETYMHNEPEMLVDQDKITDDLADAGFYREDINNALNWLEVLADLQEGQKAPYLYTADPQALRIYTVEECRRLGAACRGFILFLEQIQVLQFDTREMVIDRIMALDSPEIDLEDLKWVVLMVLFNIPGYENAYKQMEELLFEVNDGYLH</sequence>
<evidence type="ECO:0000255" key="1">
    <source>
        <dbReference type="HAMAP-Rule" id="MF_00598"/>
    </source>
</evidence>
<reference key="1">
    <citation type="journal article" date="2010" name="J. Bacteriol.">
        <title>Genome sequence of the deep-rooted Yersinia pestis strain Angola reveals new insights into the evolution and pangenome of the plague bacterium.</title>
        <authorList>
            <person name="Eppinger M."/>
            <person name="Worsham P.L."/>
            <person name="Nikolich M.P."/>
            <person name="Riley D.R."/>
            <person name="Sebastian Y."/>
            <person name="Mou S."/>
            <person name="Achtman M."/>
            <person name="Lindler L.E."/>
            <person name="Ravel J."/>
        </authorList>
    </citation>
    <scope>NUCLEOTIDE SEQUENCE [LARGE SCALE GENOMIC DNA]</scope>
    <source>
        <strain>Angola</strain>
    </source>
</reference>
<comment type="similarity">
    <text evidence="1">Belongs to the Smg family.</text>
</comment>
<protein>
    <recommendedName>
        <fullName evidence="1">Protein Smg</fullName>
    </recommendedName>
</protein>
<organism>
    <name type="scientific">Yersinia pestis bv. Antiqua (strain Angola)</name>
    <dbReference type="NCBI Taxonomy" id="349746"/>
    <lineage>
        <taxon>Bacteria</taxon>
        <taxon>Pseudomonadati</taxon>
        <taxon>Pseudomonadota</taxon>
        <taxon>Gammaproteobacteria</taxon>
        <taxon>Enterobacterales</taxon>
        <taxon>Yersiniaceae</taxon>
        <taxon>Yersinia</taxon>
    </lineage>
</organism>
<feature type="chain" id="PRO_1000129916" description="Protein Smg">
    <location>
        <begin position="1"/>
        <end position="157"/>
    </location>
</feature>